<dbReference type="EMBL" id="CP000879">
    <property type="protein sequence ID" value="ABX30848.1"/>
    <property type="molecule type" value="Genomic_DNA"/>
</dbReference>
<dbReference type="RefSeq" id="WP_012207955.1">
    <property type="nucleotide sequence ID" value="NC_010003.1"/>
</dbReference>
<dbReference type="SMR" id="A9BEX0"/>
<dbReference type="STRING" id="403833.Pmob_0099"/>
<dbReference type="KEGG" id="pmo:Pmob_0099"/>
<dbReference type="eggNOG" id="COG2052">
    <property type="taxonomic scope" value="Bacteria"/>
</dbReference>
<dbReference type="HOGENOM" id="CLU_165326_0_0_0"/>
<dbReference type="OrthoDB" id="5432174at2"/>
<dbReference type="Proteomes" id="UP000000789">
    <property type="component" value="Chromosome"/>
</dbReference>
<dbReference type="HAMAP" id="MF_01503">
    <property type="entry name" value="RemA"/>
    <property type="match status" value="1"/>
</dbReference>
<dbReference type="InterPro" id="IPR007169">
    <property type="entry name" value="RemA-like"/>
</dbReference>
<dbReference type="NCBIfam" id="NF003315">
    <property type="entry name" value="PRK04323.1"/>
    <property type="match status" value="1"/>
</dbReference>
<dbReference type="PANTHER" id="PTHR38449:SF1">
    <property type="entry name" value="REGULATORY PROTEIN SSL2874-RELATED"/>
    <property type="match status" value="1"/>
</dbReference>
<dbReference type="PANTHER" id="PTHR38449">
    <property type="entry name" value="REGULATORY PROTEIN TM_1690-RELATED"/>
    <property type="match status" value="1"/>
</dbReference>
<dbReference type="Pfam" id="PF04025">
    <property type="entry name" value="RemA-like"/>
    <property type="match status" value="1"/>
</dbReference>
<comment type="similarity">
    <text evidence="1">Belongs to the RemA family.</text>
</comment>
<name>Y099_PETMO</name>
<gene>
    <name type="ordered locus">Pmob_0099</name>
</gene>
<reference key="1">
    <citation type="submission" date="2007-11" db="EMBL/GenBank/DDBJ databases">
        <title>Complete sequence of Petroga mobilis SJ95.</title>
        <authorList>
            <consortium name="US DOE Joint Genome Institute"/>
            <person name="Copeland A."/>
            <person name="Lucas S."/>
            <person name="Lapidus A."/>
            <person name="Barry K."/>
            <person name="Glavina del Rio T."/>
            <person name="Dalin E."/>
            <person name="Tice H."/>
            <person name="Pitluck S."/>
            <person name="Meincke L."/>
            <person name="Brettin T."/>
            <person name="Bruce D."/>
            <person name="Detter J.C."/>
            <person name="Han C."/>
            <person name="Kuske C.R."/>
            <person name="Schmutz J."/>
            <person name="Larimer F."/>
            <person name="Land M."/>
            <person name="Hauser L."/>
            <person name="Kyrpides N."/>
            <person name="Mikhailova N."/>
            <person name="Noll K."/>
            <person name="Richardson P."/>
        </authorList>
    </citation>
    <scope>NUCLEOTIDE SEQUENCE [LARGE SCALE GENOMIC DNA]</scope>
    <source>
        <strain>DSM 10674 / SJ95</strain>
    </source>
</reference>
<organism>
    <name type="scientific">Petrotoga mobilis (strain DSM 10674 / SJ95)</name>
    <dbReference type="NCBI Taxonomy" id="403833"/>
    <lineage>
        <taxon>Bacteria</taxon>
        <taxon>Thermotogati</taxon>
        <taxon>Thermotogota</taxon>
        <taxon>Thermotogae</taxon>
        <taxon>Petrotogales</taxon>
        <taxon>Petrotogaceae</taxon>
        <taxon>Petrotoga</taxon>
    </lineage>
</organism>
<accession>A9BEX0</accession>
<sequence>MYGLINIGFGNIVVGDRVIAIVSPTSQPLKRLKEIAEQQGKLLEVNHGRKTRAFIITDSGHVIASAIQPETITNRFLQNYYDIEKVLDKIRKEVL</sequence>
<evidence type="ECO:0000255" key="1">
    <source>
        <dbReference type="HAMAP-Rule" id="MF_01503"/>
    </source>
</evidence>
<feature type="chain" id="PRO_1000087515" description="Putative regulatory protein Pmob_0099">
    <location>
        <begin position="1"/>
        <end position="95"/>
    </location>
</feature>
<protein>
    <recommendedName>
        <fullName evidence="1">Putative regulatory protein Pmob_0099</fullName>
    </recommendedName>
</protein>
<proteinExistence type="inferred from homology"/>